<protein>
    <recommendedName>
        <fullName>KIF-binding protein</fullName>
    </recommendedName>
    <alternativeName>
        <fullName>KIF1-binding protein</fullName>
    </alternativeName>
</protein>
<sequence>MAAAGGGWAAACEKFRSARTLSAVESRKDPETEPYRSKYSARALLQEVKQQLSAAEDCGEARLLAVRRAVLEYELGVNHTDTEELSAGEEHLQRCTQLLEPHRLSRDCVSLYIQAQNNLGILWSERDEIKTAQTYLESAEALYNQYMKEDGNPPLDPSEHFMAEEEKLTDQERSKRFEKAYTHTLYYLAQVYQHLEMIEKAAQYCHTTLKRQLEYCGYYPVEWALNAATLSQYYLSKQCFMESRHCLAAASVIFSQAGQVPSTEDNETEQDQQDLRQRKAEIARCWIKYCLNLLQSARKLLEDNIGELDPDRQLELKAQRKKEEDEKENGRKKAVLFGTSDICDSVLAMEEKVSSVYPLDFQEAREIFLVGQNYVQEAKEFFQVDGYVTDHIEIVQDHSALFKVLAFFEEDYERRCKMHKRRIDMLEPIYADLNPQYYLLISRQLQFELADTYYEMMDLKVAIGNRLEELDSHTIKKINSLAQLAIKYYELFLDSLRNPDKVFPEELEEDVLRPAMVAKFHIARLYGKLITSDSKKQLENMQTSLEYYTFLVDYCEKHPDAVRAVETELELSKEMVGLLPTRMERLRAKLCPFI</sequence>
<comment type="function">
    <text evidence="1">Activator of KIF1B plus-end-directed microtubule motor activity. Required for organization of axonal microtubules, and axonal outgrowth and maintenance during peripheral and central nervous system development.</text>
</comment>
<comment type="subcellular location">
    <subcellularLocation>
        <location evidence="1">Cytoplasm</location>
        <location evidence="1">Cytoskeleton</location>
    </subcellularLocation>
</comment>
<comment type="similarity">
    <text evidence="2">Belongs to the KIF-binding protein family.</text>
</comment>
<feature type="chain" id="PRO_0000050793" description="KIF-binding protein">
    <location>
        <begin position="1"/>
        <end position="594"/>
    </location>
</feature>
<dbReference type="EMBL" id="AJ720765">
    <property type="protein sequence ID" value="CAG32424.1"/>
    <property type="molecule type" value="mRNA"/>
</dbReference>
<dbReference type="RefSeq" id="NP_001007945.1">
    <property type="nucleotide sequence ID" value="NM_001007944.1"/>
</dbReference>
<dbReference type="SMR" id="Q5ZIL9"/>
<dbReference type="FunCoup" id="Q5ZIL9">
    <property type="interactions" value="1121"/>
</dbReference>
<dbReference type="STRING" id="9031.ENSGALP00000006597"/>
<dbReference type="PaxDb" id="9031-ENSGALP00000006597"/>
<dbReference type="Ensembl" id="ENSGALT00010056514.1">
    <property type="protein sequence ID" value="ENSGALP00010034256.1"/>
    <property type="gene ID" value="ENSGALG00010023188.1"/>
</dbReference>
<dbReference type="GeneID" id="423694"/>
<dbReference type="KEGG" id="gga:423694"/>
<dbReference type="CTD" id="423694"/>
<dbReference type="VEuPathDB" id="HostDB:geneid_423694"/>
<dbReference type="eggNOG" id="ENOG502QPZT">
    <property type="taxonomic scope" value="Eukaryota"/>
</dbReference>
<dbReference type="GeneTree" id="ENSGT00390000013819"/>
<dbReference type="HOGENOM" id="CLU_019859_1_0_1"/>
<dbReference type="InParanoid" id="Q5ZIL9"/>
<dbReference type="OMA" id="ICRECWY"/>
<dbReference type="OrthoDB" id="409897at2759"/>
<dbReference type="PhylomeDB" id="Q5ZIL9"/>
<dbReference type="TreeFam" id="TF324211"/>
<dbReference type="PRO" id="PR:Q5ZIL9"/>
<dbReference type="Proteomes" id="UP000000539">
    <property type="component" value="Chromosome 6"/>
</dbReference>
<dbReference type="Bgee" id="ENSGALG00000004156">
    <property type="expression patterns" value="Expressed in spermatid and 13 other cell types or tissues"/>
</dbReference>
<dbReference type="GO" id="GO:0005856">
    <property type="term" value="C:cytoskeleton"/>
    <property type="evidence" value="ECO:0007669"/>
    <property type="project" value="UniProtKB-SubCell"/>
</dbReference>
<dbReference type="GO" id="GO:0005739">
    <property type="term" value="C:mitochondrion"/>
    <property type="evidence" value="ECO:0000250"/>
    <property type="project" value="UniProtKB"/>
</dbReference>
<dbReference type="GO" id="GO:0019894">
    <property type="term" value="F:kinesin binding"/>
    <property type="evidence" value="ECO:0007669"/>
    <property type="project" value="Ensembl"/>
</dbReference>
<dbReference type="GO" id="GO:0140311">
    <property type="term" value="F:protein sequestering activity"/>
    <property type="evidence" value="ECO:0007669"/>
    <property type="project" value="Ensembl"/>
</dbReference>
<dbReference type="GO" id="GO:0021952">
    <property type="term" value="P:central nervous system projection neuron axonogenesis"/>
    <property type="evidence" value="ECO:0000318"/>
    <property type="project" value="GO_Central"/>
</dbReference>
<dbReference type="GO" id="GO:0000226">
    <property type="term" value="P:microtubule cytoskeleton organization"/>
    <property type="evidence" value="ECO:0000318"/>
    <property type="project" value="GO_Central"/>
</dbReference>
<dbReference type="GO" id="GO:0047497">
    <property type="term" value="P:mitochondrion transport along microtubule"/>
    <property type="evidence" value="ECO:0000250"/>
    <property type="project" value="UniProtKB"/>
</dbReference>
<dbReference type="GO" id="GO:1990535">
    <property type="term" value="P:neuron projection maintenance"/>
    <property type="evidence" value="ECO:0000318"/>
    <property type="project" value="GO_Central"/>
</dbReference>
<dbReference type="Gene3D" id="1.25.40.10">
    <property type="entry name" value="Tetratricopeptide repeat domain"/>
    <property type="match status" value="1"/>
</dbReference>
<dbReference type="InterPro" id="IPR022083">
    <property type="entry name" value="KBP"/>
</dbReference>
<dbReference type="InterPro" id="IPR011990">
    <property type="entry name" value="TPR-like_helical_dom_sf"/>
</dbReference>
<dbReference type="PANTHER" id="PTHR46321:SF1">
    <property type="entry name" value="KIF-BINDING PROTEIN"/>
    <property type="match status" value="1"/>
</dbReference>
<dbReference type="PANTHER" id="PTHR46321">
    <property type="entry name" value="KIF1-BINDING PROTEIN"/>
    <property type="match status" value="1"/>
</dbReference>
<dbReference type="Pfam" id="PF12309">
    <property type="entry name" value="KBP_C"/>
    <property type="match status" value="1"/>
</dbReference>
<dbReference type="SUPFAM" id="SSF48452">
    <property type="entry name" value="TPR-like"/>
    <property type="match status" value="1"/>
</dbReference>
<keyword id="KW-0963">Cytoplasm</keyword>
<keyword id="KW-0206">Cytoskeleton</keyword>
<keyword id="KW-0217">Developmental protein</keyword>
<keyword id="KW-0221">Differentiation</keyword>
<keyword id="KW-0524">Neurogenesis</keyword>
<keyword id="KW-1185">Reference proteome</keyword>
<organism>
    <name type="scientific">Gallus gallus</name>
    <name type="common">Chicken</name>
    <dbReference type="NCBI Taxonomy" id="9031"/>
    <lineage>
        <taxon>Eukaryota</taxon>
        <taxon>Metazoa</taxon>
        <taxon>Chordata</taxon>
        <taxon>Craniata</taxon>
        <taxon>Vertebrata</taxon>
        <taxon>Euteleostomi</taxon>
        <taxon>Archelosauria</taxon>
        <taxon>Archosauria</taxon>
        <taxon>Dinosauria</taxon>
        <taxon>Saurischia</taxon>
        <taxon>Theropoda</taxon>
        <taxon>Coelurosauria</taxon>
        <taxon>Aves</taxon>
        <taxon>Neognathae</taxon>
        <taxon>Galloanserae</taxon>
        <taxon>Galliformes</taxon>
        <taxon>Phasianidae</taxon>
        <taxon>Phasianinae</taxon>
        <taxon>Gallus</taxon>
    </lineage>
</organism>
<reference key="1">
    <citation type="journal article" date="2005" name="Genome Biol.">
        <title>Full-length cDNAs from chicken bursal lymphocytes to facilitate gene function analysis.</title>
        <authorList>
            <person name="Caldwell R.B."/>
            <person name="Kierzek A.M."/>
            <person name="Arakawa H."/>
            <person name="Bezzubov Y."/>
            <person name="Zaim J."/>
            <person name="Fiedler P."/>
            <person name="Kutter S."/>
            <person name="Blagodatski A."/>
            <person name="Kostovska D."/>
            <person name="Koter M."/>
            <person name="Plachy J."/>
            <person name="Carninci P."/>
            <person name="Hayashizaki Y."/>
            <person name="Buerstedde J.-M."/>
        </authorList>
    </citation>
    <scope>NUCLEOTIDE SEQUENCE [LARGE SCALE MRNA]</scope>
    <source>
        <strain>CB</strain>
        <tissue>Bursa of Fabricius</tissue>
    </source>
</reference>
<proteinExistence type="evidence at transcript level"/>
<accession>Q5ZIL9</accession>
<evidence type="ECO:0000250" key="1">
    <source>
        <dbReference type="UniProtKB" id="Q96EK5"/>
    </source>
</evidence>
<evidence type="ECO:0000305" key="2"/>
<name>KBP_CHICK</name>
<gene>
    <name type="primary">Kifbp</name>
    <name type="synonym">kbp</name>
    <name type="ORF">RCJMB04_25c4</name>
</gene>